<accession>Q5QV55</accession>
<comment type="function">
    <text evidence="1">Specifically methylates the guanosine in position 1516 of 16S rRNA.</text>
</comment>
<comment type="catalytic activity">
    <reaction evidence="1">
        <text>guanosine(1516) in 16S rRNA + S-adenosyl-L-methionine = N(2)-methylguanosine(1516) in 16S rRNA + S-adenosyl-L-homocysteine + H(+)</text>
        <dbReference type="Rhea" id="RHEA:43220"/>
        <dbReference type="Rhea" id="RHEA-COMP:10412"/>
        <dbReference type="Rhea" id="RHEA-COMP:10413"/>
        <dbReference type="ChEBI" id="CHEBI:15378"/>
        <dbReference type="ChEBI" id="CHEBI:57856"/>
        <dbReference type="ChEBI" id="CHEBI:59789"/>
        <dbReference type="ChEBI" id="CHEBI:74269"/>
        <dbReference type="ChEBI" id="CHEBI:74481"/>
        <dbReference type="EC" id="2.1.1.242"/>
    </reaction>
</comment>
<comment type="subcellular location">
    <subcellularLocation>
        <location evidence="1">Cytoplasm</location>
    </subcellularLocation>
</comment>
<comment type="similarity">
    <text evidence="1">Belongs to the methyltransferase superfamily. RsmJ family.</text>
</comment>
<proteinExistence type="inferred from homology"/>
<keyword id="KW-0963">Cytoplasm</keyword>
<keyword id="KW-0489">Methyltransferase</keyword>
<keyword id="KW-1185">Reference proteome</keyword>
<keyword id="KW-0698">rRNA processing</keyword>
<keyword id="KW-0949">S-adenosyl-L-methionine</keyword>
<keyword id="KW-0808">Transferase</keyword>
<name>RSMJ_IDILO</name>
<sequence>MTTTARVPILADSDAETVAVKAIAERWGLPFETTDNDVFQLWLTEGVLALHWLQSPQKMSPLVVDFHQGKAAYRAQNTQLKNEAIAKAVGVTGQFKPSVVDGTAGLGRDAFVLAGLGCNVQLIERHPVVAALLDNGLHRAQKEHDFIGDTCLRMQLIGTDNLFTGSGYTQEPDVVYLDPMYPKTGKQKAQVKKDMQMFQQLVGSDEDADTLLEPAIALAKYRVVVKRPNSAPFLAGREPNSQIKSKKHRFDVYIKRGFHESAN</sequence>
<feature type="chain" id="PRO_0000212071" description="Ribosomal RNA small subunit methyltransferase J">
    <location>
        <begin position="1"/>
        <end position="263"/>
    </location>
</feature>
<feature type="binding site" evidence="1">
    <location>
        <begin position="108"/>
        <end position="109"/>
    </location>
    <ligand>
        <name>S-adenosyl-L-methionine</name>
        <dbReference type="ChEBI" id="CHEBI:59789"/>
    </ligand>
</feature>
<feature type="binding site" evidence="1">
    <location>
        <begin position="124"/>
        <end position="125"/>
    </location>
    <ligand>
        <name>S-adenosyl-L-methionine</name>
        <dbReference type="ChEBI" id="CHEBI:59789"/>
    </ligand>
</feature>
<feature type="binding site" evidence="1">
    <location>
        <position position="178"/>
    </location>
    <ligand>
        <name>S-adenosyl-L-methionine</name>
        <dbReference type="ChEBI" id="CHEBI:59789"/>
    </ligand>
</feature>
<dbReference type="EC" id="2.1.1.242" evidence="1"/>
<dbReference type="EMBL" id="AE017340">
    <property type="protein sequence ID" value="AAV83309.1"/>
    <property type="molecule type" value="Genomic_DNA"/>
</dbReference>
<dbReference type="RefSeq" id="WP_011235701.1">
    <property type="nucleotide sequence ID" value="NC_006512.1"/>
</dbReference>
<dbReference type="SMR" id="Q5QV55"/>
<dbReference type="STRING" id="283942.IL2477"/>
<dbReference type="GeneID" id="41337671"/>
<dbReference type="KEGG" id="ilo:IL2477"/>
<dbReference type="eggNOG" id="COG0742">
    <property type="taxonomic scope" value="Bacteria"/>
</dbReference>
<dbReference type="HOGENOM" id="CLU_076324_0_1_6"/>
<dbReference type="OrthoDB" id="3191794at2"/>
<dbReference type="Proteomes" id="UP000001171">
    <property type="component" value="Chromosome"/>
</dbReference>
<dbReference type="GO" id="GO:0005737">
    <property type="term" value="C:cytoplasm"/>
    <property type="evidence" value="ECO:0007669"/>
    <property type="project" value="UniProtKB-SubCell"/>
</dbReference>
<dbReference type="GO" id="GO:0008990">
    <property type="term" value="F:rRNA (guanine-N2-)-methyltransferase activity"/>
    <property type="evidence" value="ECO:0007669"/>
    <property type="project" value="UniProtKB-UniRule"/>
</dbReference>
<dbReference type="Gene3D" id="3.40.50.150">
    <property type="entry name" value="Vaccinia Virus protein VP39"/>
    <property type="match status" value="1"/>
</dbReference>
<dbReference type="HAMAP" id="MF_01523">
    <property type="entry name" value="16SrRNA_methyltr_J"/>
    <property type="match status" value="1"/>
</dbReference>
<dbReference type="InterPro" id="IPR007536">
    <property type="entry name" value="16SrRNA_methylTrfase_J"/>
</dbReference>
<dbReference type="InterPro" id="IPR029063">
    <property type="entry name" value="SAM-dependent_MTases_sf"/>
</dbReference>
<dbReference type="PANTHER" id="PTHR36112">
    <property type="entry name" value="RIBOSOMAL RNA SMALL SUBUNIT METHYLTRANSFERASE J"/>
    <property type="match status" value="1"/>
</dbReference>
<dbReference type="PANTHER" id="PTHR36112:SF1">
    <property type="entry name" value="RIBOSOMAL RNA SMALL SUBUNIT METHYLTRANSFERASE J"/>
    <property type="match status" value="1"/>
</dbReference>
<dbReference type="Pfam" id="PF04445">
    <property type="entry name" value="SAM_MT"/>
    <property type="match status" value="1"/>
</dbReference>
<dbReference type="SUPFAM" id="SSF53335">
    <property type="entry name" value="S-adenosyl-L-methionine-dependent methyltransferases"/>
    <property type="match status" value="1"/>
</dbReference>
<gene>
    <name evidence="1" type="primary">rsmJ</name>
    <name type="ordered locus">IL2477</name>
</gene>
<protein>
    <recommendedName>
        <fullName evidence="1">Ribosomal RNA small subunit methyltransferase J</fullName>
        <ecNumber evidence="1">2.1.1.242</ecNumber>
    </recommendedName>
    <alternativeName>
        <fullName evidence="1">16S rRNA m2G1516 methyltransferase</fullName>
    </alternativeName>
    <alternativeName>
        <fullName evidence="1">rRNA (guanine-N(2)-)-methyltransferase</fullName>
    </alternativeName>
</protein>
<evidence type="ECO:0000255" key="1">
    <source>
        <dbReference type="HAMAP-Rule" id="MF_01523"/>
    </source>
</evidence>
<organism>
    <name type="scientific">Idiomarina loihiensis (strain ATCC BAA-735 / DSM 15497 / L2-TR)</name>
    <dbReference type="NCBI Taxonomy" id="283942"/>
    <lineage>
        <taxon>Bacteria</taxon>
        <taxon>Pseudomonadati</taxon>
        <taxon>Pseudomonadota</taxon>
        <taxon>Gammaproteobacteria</taxon>
        <taxon>Alteromonadales</taxon>
        <taxon>Idiomarinaceae</taxon>
        <taxon>Idiomarina</taxon>
    </lineage>
</organism>
<reference key="1">
    <citation type="journal article" date="2004" name="Proc. Natl. Acad. Sci. U.S.A.">
        <title>Genome sequence of the deep-sea gamma-proteobacterium Idiomarina loihiensis reveals amino acid fermentation as a source of carbon and energy.</title>
        <authorList>
            <person name="Hou S."/>
            <person name="Saw J.H."/>
            <person name="Lee K.S."/>
            <person name="Freitas T.A."/>
            <person name="Belisle C."/>
            <person name="Kawarabayasi Y."/>
            <person name="Donachie S.P."/>
            <person name="Pikina A."/>
            <person name="Galperin M.Y."/>
            <person name="Koonin E.V."/>
            <person name="Makarova K.S."/>
            <person name="Omelchenko M.V."/>
            <person name="Sorokin A."/>
            <person name="Wolf Y.I."/>
            <person name="Li Q.X."/>
            <person name="Keum Y.S."/>
            <person name="Campbell S."/>
            <person name="Denery J."/>
            <person name="Aizawa S."/>
            <person name="Shibata S."/>
            <person name="Malahoff A."/>
            <person name="Alam M."/>
        </authorList>
    </citation>
    <scope>NUCLEOTIDE SEQUENCE [LARGE SCALE GENOMIC DNA]</scope>
    <source>
        <strain>ATCC BAA-735 / DSM 15497 / L2-TR</strain>
    </source>
</reference>